<dbReference type="EC" id="6.3.5.5" evidence="1"/>
<dbReference type="EMBL" id="AJ132624">
    <property type="protein sequence ID" value="CAB89872.1"/>
    <property type="molecule type" value="Genomic_DNA"/>
</dbReference>
<dbReference type="EMBL" id="AM406671">
    <property type="protein sequence ID" value="CAL97488.1"/>
    <property type="molecule type" value="Genomic_DNA"/>
</dbReference>
<dbReference type="RefSeq" id="WP_011834852.1">
    <property type="nucleotide sequence ID" value="NC_009004.1"/>
</dbReference>
<dbReference type="SMR" id="Q9L4N5"/>
<dbReference type="STRING" id="416870.llmg_0894"/>
<dbReference type="KEGG" id="llm:llmg_0894"/>
<dbReference type="eggNOG" id="COG0505">
    <property type="taxonomic scope" value="Bacteria"/>
</dbReference>
<dbReference type="HOGENOM" id="CLU_035901_2_1_9"/>
<dbReference type="OrthoDB" id="9804328at2"/>
<dbReference type="PhylomeDB" id="Q9L4N5"/>
<dbReference type="UniPathway" id="UPA00068">
    <property type="reaction ID" value="UER00171"/>
</dbReference>
<dbReference type="UniPathway" id="UPA00070">
    <property type="reaction ID" value="UER00115"/>
</dbReference>
<dbReference type="Proteomes" id="UP000000364">
    <property type="component" value="Chromosome"/>
</dbReference>
<dbReference type="GO" id="GO:0005524">
    <property type="term" value="F:ATP binding"/>
    <property type="evidence" value="ECO:0007669"/>
    <property type="project" value="UniProtKB-UniRule"/>
</dbReference>
<dbReference type="GO" id="GO:0004088">
    <property type="term" value="F:carbamoyl-phosphate synthase (glutamine-hydrolyzing) activity"/>
    <property type="evidence" value="ECO:0007669"/>
    <property type="project" value="UniProtKB-UniRule"/>
</dbReference>
<dbReference type="GO" id="GO:0004359">
    <property type="term" value="F:glutaminase activity"/>
    <property type="evidence" value="ECO:0007669"/>
    <property type="project" value="RHEA"/>
</dbReference>
<dbReference type="GO" id="GO:0006207">
    <property type="term" value="P:'de novo' pyrimidine nucleobase biosynthetic process"/>
    <property type="evidence" value="ECO:0007669"/>
    <property type="project" value="InterPro"/>
</dbReference>
<dbReference type="GO" id="GO:0044205">
    <property type="term" value="P:'de novo' UMP biosynthetic process"/>
    <property type="evidence" value="ECO:0007669"/>
    <property type="project" value="UniProtKB-UniRule"/>
</dbReference>
<dbReference type="GO" id="GO:0006541">
    <property type="term" value="P:glutamine metabolic process"/>
    <property type="evidence" value="ECO:0007669"/>
    <property type="project" value="InterPro"/>
</dbReference>
<dbReference type="GO" id="GO:0006526">
    <property type="term" value="P:L-arginine biosynthetic process"/>
    <property type="evidence" value="ECO:0007669"/>
    <property type="project" value="UniProtKB-UniRule"/>
</dbReference>
<dbReference type="CDD" id="cd01744">
    <property type="entry name" value="GATase1_CPSase"/>
    <property type="match status" value="1"/>
</dbReference>
<dbReference type="FunFam" id="3.40.50.880:FF:000029">
    <property type="entry name" value="Carbamoyl-phosphate synthase small chain"/>
    <property type="match status" value="1"/>
</dbReference>
<dbReference type="FunFam" id="3.50.30.20:FF:000001">
    <property type="entry name" value="Carbamoyl-phosphate synthase small chain"/>
    <property type="match status" value="1"/>
</dbReference>
<dbReference type="Gene3D" id="3.40.50.880">
    <property type="match status" value="1"/>
</dbReference>
<dbReference type="Gene3D" id="3.50.30.20">
    <property type="entry name" value="Carbamoyl-phosphate synthase small subunit, N-terminal domain"/>
    <property type="match status" value="1"/>
</dbReference>
<dbReference type="HAMAP" id="MF_01209">
    <property type="entry name" value="CPSase_S_chain"/>
    <property type="match status" value="1"/>
</dbReference>
<dbReference type="InterPro" id="IPR050472">
    <property type="entry name" value="Anth_synth/Amidotransfase"/>
</dbReference>
<dbReference type="InterPro" id="IPR006274">
    <property type="entry name" value="CarbamoylP_synth_ssu"/>
</dbReference>
<dbReference type="InterPro" id="IPR002474">
    <property type="entry name" value="CarbamoylP_synth_ssu_N"/>
</dbReference>
<dbReference type="InterPro" id="IPR036480">
    <property type="entry name" value="CarbP_synth_ssu_N_sf"/>
</dbReference>
<dbReference type="InterPro" id="IPR029062">
    <property type="entry name" value="Class_I_gatase-like"/>
</dbReference>
<dbReference type="InterPro" id="IPR035686">
    <property type="entry name" value="CPSase_GATase1"/>
</dbReference>
<dbReference type="InterPro" id="IPR017926">
    <property type="entry name" value="GATASE"/>
</dbReference>
<dbReference type="NCBIfam" id="TIGR01368">
    <property type="entry name" value="CPSaseIIsmall"/>
    <property type="match status" value="1"/>
</dbReference>
<dbReference type="NCBIfam" id="NF009475">
    <property type="entry name" value="PRK12838.1"/>
    <property type="match status" value="1"/>
</dbReference>
<dbReference type="PANTHER" id="PTHR43418:SF7">
    <property type="entry name" value="CARBAMOYL-PHOSPHATE SYNTHASE SMALL CHAIN"/>
    <property type="match status" value="1"/>
</dbReference>
<dbReference type="PANTHER" id="PTHR43418">
    <property type="entry name" value="MULTIFUNCTIONAL TRYPTOPHAN BIOSYNTHESIS PROTEIN-RELATED"/>
    <property type="match status" value="1"/>
</dbReference>
<dbReference type="Pfam" id="PF00988">
    <property type="entry name" value="CPSase_sm_chain"/>
    <property type="match status" value="1"/>
</dbReference>
<dbReference type="Pfam" id="PF00117">
    <property type="entry name" value="GATase"/>
    <property type="match status" value="1"/>
</dbReference>
<dbReference type="PRINTS" id="PR00097">
    <property type="entry name" value="ANTSNTHASEII"/>
</dbReference>
<dbReference type="PRINTS" id="PR00099">
    <property type="entry name" value="CPSGATASE"/>
</dbReference>
<dbReference type="PRINTS" id="PR00096">
    <property type="entry name" value="GATASE"/>
</dbReference>
<dbReference type="SMART" id="SM01097">
    <property type="entry name" value="CPSase_sm_chain"/>
    <property type="match status" value="1"/>
</dbReference>
<dbReference type="SUPFAM" id="SSF52021">
    <property type="entry name" value="Carbamoyl phosphate synthetase, small subunit N-terminal domain"/>
    <property type="match status" value="1"/>
</dbReference>
<dbReference type="SUPFAM" id="SSF52317">
    <property type="entry name" value="Class I glutamine amidotransferase-like"/>
    <property type="match status" value="1"/>
</dbReference>
<dbReference type="PROSITE" id="PS51273">
    <property type="entry name" value="GATASE_TYPE_1"/>
    <property type="match status" value="1"/>
</dbReference>
<gene>
    <name evidence="1" type="primary">carA</name>
    <name type="ordered locus">llmg_0894</name>
</gene>
<proteinExistence type="inferred from homology"/>
<protein>
    <recommendedName>
        <fullName evidence="1">Carbamoyl phosphate synthase small chain</fullName>
        <ecNumber evidence="1">6.3.5.5</ecNumber>
    </recommendedName>
    <alternativeName>
        <fullName evidence="1">Carbamoyl phosphate synthetase glutamine chain</fullName>
    </alternativeName>
</protein>
<organism>
    <name type="scientific">Lactococcus lactis subsp. cremoris (strain MG1363)</name>
    <dbReference type="NCBI Taxonomy" id="416870"/>
    <lineage>
        <taxon>Bacteria</taxon>
        <taxon>Bacillati</taxon>
        <taxon>Bacillota</taxon>
        <taxon>Bacilli</taxon>
        <taxon>Lactobacillales</taxon>
        <taxon>Streptococcaceae</taxon>
        <taxon>Lactococcus</taxon>
        <taxon>Lactococcus cremoris subsp. cremoris</taxon>
    </lineage>
</organism>
<accession>Q9L4N5</accession>
<accession>A2RJN5</accession>
<keyword id="KW-0028">Amino-acid biosynthesis</keyword>
<keyword id="KW-0055">Arginine biosynthesis</keyword>
<keyword id="KW-0067">ATP-binding</keyword>
<keyword id="KW-0315">Glutamine amidotransferase</keyword>
<keyword id="KW-0436">Ligase</keyword>
<keyword id="KW-0547">Nucleotide-binding</keyword>
<keyword id="KW-0665">Pyrimidine biosynthesis</keyword>
<reference key="1">
    <citation type="journal article" date="2001" name="J. Bacteriol.">
        <title>The pyrimidine operon pyrRPB-carA from Lactococcus lactis.</title>
        <authorList>
            <person name="Martinussen J."/>
            <person name="Schallert J."/>
            <person name="Andersen B."/>
            <person name="Hammer K."/>
        </authorList>
    </citation>
    <scope>NUCLEOTIDE SEQUENCE [GENOMIC DNA]</scope>
</reference>
<reference key="2">
    <citation type="journal article" date="2007" name="J. Bacteriol.">
        <title>The complete genome sequence of the lactic acid bacterial paradigm Lactococcus lactis subsp. cremoris MG1363.</title>
        <authorList>
            <person name="Wegmann U."/>
            <person name="O'Connell-Motherway M."/>
            <person name="Zomer A."/>
            <person name="Buist G."/>
            <person name="Shearman C."/>
            <person name="Canchaya C."/>
            <person name="Ventura M."/>
            <person name="Goesmann A."/>
            <person name="Gasson M.J."/>
            <person name="Kuipers O.P."/>
            <person name="van Sinderen D."/>
            <person name="Kok J."/>
        </authorList>
    </citation>
    <scope>NUCLEOTIDE SEQUENCE [LARGE SCALE GENOMIC DNA]</scope>
    <source>
        <strain>MG1363</strain>
    </source>
</reference>
<name>CARA_LACLM</name>
<sequence length="357" mass="39637">MSKRLLILEDGTIFEGEALGANLDVTGELVFNTGMTGYQESITDQSYNGQILTFTYPIVGNYGVNRDDYESIHPTCKAVVVHEAARRPSNWRMQMSFDEFLKSKNIPGITGVDTRAITKIVREHGTMKASLVQARDEVDHQMSQLQATVLPTNQVETSSTATAYPSPNTGRKVVVVDFGLKHSILRELSKRECNLTVVPYNTSAKEILEMEPDGVMLTNGPGDPTDVPEAIEMIKEVQGKIPIFGICLGHQLFSLANGATTYKMKFGHRGFNHAVREVATGRIDFTSQNHGYAVSSENLPEDLMITHVEINDNSVEGVRHKYFPAFSVQFHPDAAPGPHDASYLFDDFMDLMDNFKK</sequence>
<feature type="chain" id="PRO_0000112285" description="Carbamoyl phosphate synthase small chain">
    <location>
        <begin position="1"/>
        <end position="357"/>
    </location>
</feature>
<feature type="domain" description="Glutamine amidotransferase type-1" evidence="1">
    <location>
        <begin position="172"/>
        <end position="357"/>
    </location>
</feature>
<feature type="region of interest" description="CPSase" evidence="1">
    <location>
        <begin position="1"/>
        <end position="168"/>
    </location>
</feature>
<feature type="active site" description="Nucleophile" evidence="1">
    <location>
        <position position="247"/>
    </location>
</feature>
<feature type="active site" evidence="1">
    <location>
        <position position="331"/>
    </location>
</feature>
<feature type="active site" evidence="1">
    <location>
        <position position="333"/>
    </location>
</feature>
<feature type="binding site" evidence="1">
    <location>
        <position position="46"/>
    </location>
    <ligand>
        <name>L-glutamine</name>
        <dbReference type="ChEBI" id="CHEBI:58359"/>
    </ligand>
</feature>
<feature type="binding site" evidence="1">
    <location>
        <position position="220"/>
    </location>
    <ligand>
        <name>L-glutamine</name>
        <dbReference type="ChEBI" id="CHEBI:58359"/>
    </ligand>
</feature>
<feature type="binding site" evidence="1">
    <location>
        <position position="222"/>
    </location>
    <ligand>
        <name>L-glutamine</name>
        <dbReference type="ChEBI" id="CHEBI:58359"/>
    </ligand>
</feature>
<feature type="binding site" evidence="1">
    <location>
        <position position="248"/>
    </location>
    <ligand>
        <name>L-glutamine</name>
        <dbReference type="ChEBI" id="CHEBI:58359"/>
    </ligand>
</feature>
<feature type="binding site" evidence="1">
    <location>
        <position position="251"/>
    </location>
    <ligand>
        <name>L-glutamine</name>
        <dbReference type="ChEBI" id="CHEBI:58359"/>
    </ligand>
</feature>
<feature type="binding site" evidence="1">
    <location>
        <position position="289"/>
    </location>
    <ligand>
        <name>L-glutamine</name>
        <dbReference type="ChEBI" id="CHEBI:58359"/>
    </ligand>
</feature>
<feature type="binding site" evidence="1">
    <location>
        <position position="291"/>
    </location>
    <ligand>
        <name>L-glutamine</name>
        <dbReference type="ChEBI" id="CHEBI:58359"/>
    </ligand>
</feature>
<feature type="binding site" evidence="1">
    <location>
        <position position="292"/>
    </location>
    <ligand>
        <name>L-glutamine</name>
        <dbReference type="ChEBI" id="CHEBI:58359"/>
    </ligand>
</feature>
<comment type="function">
    <text evidence="1">Small subunit of the glutamine-dependent carbamoyl phosphate synthetase (CPSase). CPSase catalyzes the formation of carbamoyl phosphate from the ammonia moiety of glutamine, carbonate, and phosphate donated by ATP, constituting the first step of 2 biosynthetic pathways, one leading to arginine and/or urea and the other to pyrimidine nucleotides. The small subunit (glutamine amidotransferase) binds and cleaves glutamine to supply the large subunit with the substrate ammonia.</text>
</comment>
<comment type="catalytic activity">
    <reaction evidence="1">
        <text>hydrogencarbonate + L-glutamine + 2 ATP + H2O = carbamoyl phosphate + L-glutamate + 2 ADP + phosphate + 2 H(+)</text>
        <dbReference type="Rhea" id="RHEA:18633"/>
        <dbReference type="ChEBI" id="CHEBI:15377"/>
        <dbReference type="ChEBI" id="CHEBI:15378"/>
        <dbReference type="ChEBI" id="CHEBI:17544"/>
        <dbReference type="ChEBI" id="CHEBI:29985"/>
        <dbReference type="ChEBI" id="CHEBI:30616"/>
        <dbReference type="ChEBI" id="CHEBI:43474"/>
        <dbReference type="ChEBI" id="CHEBI:58228"/>
        <dbReference type="ChEBI" id="CHEBI:58359"/>
        <dbReference type="ChEBI" id="CHEBI:456216"/>
        <dbReference type="EC" id="6.3.5.5"/>
    </reaction>
</comment>
<comment type="catalytic activity">
    <molecule>Carbamoyl phosphate synthase small chain</molecule>
    <reaction evidence="1">
        <text>L-glutamine + H2O = L-glutamate + NH4(+)</text>
        <dbReference type="Rhea" id="RHEA:15889"/>
        <dbReference type="ChEBI" id="CHEBI:15377"/>
        <dbReference type="ChEBI" id="CHEBI:28938"/>
        <dbReference type="ChEBI" id="CHEBI:29985"/>
        <dbReference type="ChEBI" id="CHEBI:58359"/>
    </reaction>
</comment>
<comment type="pathway">
    <text evidence="1">Amino-acid biosynthesis; L-arginine biosynthesis; carbamoyl phosphate from bicarbonate: step 1/1.</text>
</comment>
<comment type="pathway">
    <text evidence="1">Pyrimidine metabolism; UMP biosynthesis via de novo pathway; (S)-dihydroorotate from bicarbonate: step 1/3.</text>
</comment>
<comment type="subunit">
    <text evidence="1">Composed of two chains; the small (or glutamine) chain promotes the hydrolysis of glutamine to ammonia, which is used by the large (or ammonia) chain to synthesize carbamoyl phosphate. Tetramer of heterodimers (alpha,beta)4.</text>
</comment>
<comment type="similarity">
    <text evidence="1">Belongs to the CarA family.</text>
</comment>
<evidence type="ECO:0000255" key="1">
    <source>
        <dbReference type="HAMAP-Rule" id="MF_01209"/>
    </source>
</evidence>